<feature type="chain" id="PRO_0000331868" description="Methionine--tRNA ligase">
    <location>
        <begin position="1"/>
        <end position="678"/>
    </location>
</feature>
<feature type="domain" description="tRNA-binding" evidence="1">
    <location>
        <begin position="576"/>
        <end position="678"/>
    </location>
</feature>
<feature type="short sequence motif" description="'HIGH' region">
    <location>
        <begin position="14"/>
        <end position="24"/>
    </location>
</feature>
<feature type="short sequence motif" description="'KMSKS' region">
    <location>
        <begin position="331"/>
        <end position="335"/>
    </location>
</feature>
<feature type="binding site" evidence="1">
    <location>
        <position position="145"/>
    </location>
    <ligand>
        <name>Zn(2+)</name>
        <dbReference type="ChEBI" id="CHEBI:29105"/>
    </ligand>
</feature>
<feature type="binding site" evidence="1">
    <location>
        <position position="148"/>
    </location>
    <ligand>
        <name>Zn(2+)</name>
        <dbReference type="ChEBI" id="CHEBI:29105"/>
    </ligand>
</feature>
<feature type="binding site" evidence="1">
    <location>
        <position position="158"/>
    </location>
    <ligand>
        <name>Zn(2+)</name>
        <dbReference type="ChEBI" id="CHEBI:29105"/>
    </ligand>
</feature>
<feature type="binding site" evidence="1">
    <location>
        <position position="161"/>
    </location>
    <ligand>
        <name>Zn(2+)</name>
        <dbReference type="ChEBI" id="CHEBI:29105"/>
    </ligand>
</feature>
<feature type="binding site" evidence="1">
    <location>
        <position position="334"/>
    </location>
    <ligand>
        <name>ATP</name>
        <dbReference type="ChEBI" id="CHEBI:30616"/>
    </ligand>
</feature>
<protein>
    <recommendedName>
        <fullName evidence="1">Methionine--tRNA ligase</fullName>
        <ecNumber evidence="1">6.1.1.10</ecNumber>
    </recommendedName>
    <alternativeName>
        <fullName evidence="1">Methionyl-tRNA synthetase</fullName>
        <shortName evidence="1">MetRS</shortName>
    </alternativeName>
</protein>
<sequence length="678" mass="75033">MSEPRKILVTSALPYANGSIHLGHMLEYIQTDMWVRFQKMRGNQAVYVCADDAHGSAIMLRAEREGITSEQLIDAVRAEHMGDFADFLVDFDNYHSTHSEENRELSSAIYLKLRDAGHIDTRPVTQYFDPEKQMFLADRFIKGTCPKCGTADQYGDNCEACGATYAPTELKDPKSAISGATPVLKESLHYFFKLPDFEAMLKQWTRSGALQESVANKLAEWLDSGLQQWDISRDAPYFGFEIPDAPGKYFYVWLDAPIGYMASFKNLCARRPELDFDAFWGKDSSAELYHFIGKDIVNFHALFWPAMLEGAGYRKPTALNVHGYLTVNGQKMSKSRGTFVKARTYLDHLDPEYLRYYYASKLGRGVEDLDLNLEDFVQKVNSDLVGKVVNIASRCAGFIHKGNAGVLVGADPAPELLAAFREAAPGIAEAYEARDFNRAMREIMALADRANAWIAEQAPWALAKQEGQQDKVQAVCGLGINLFRQLVIFLKPVLPKLAAAAEAFLNVAPLTWADHRTLLANHQLNPFQPLMTRIEPAKVEAMIEASKEDLAAAASQPAGNGELVKEPIAAEIDFDAFAAVDLRIALIEKCEFVEGADKLLRLSLDIGDAKRNVFSGIKSAYPDPSALEGRLTLYVANLAPRKMKFGVSEGMVLAAGPGGEEIYLLSPDSGAKPGQRVK</sequence>
<dbReference type="EC" id="6.1.1.10" evidence="1"/>
<dbReference type="EMBL" id="CP000438">
    <property type="protein sequence ID" value="ABJ12736.1"/>
    <property type="molecule type" value="Genomic_DNA"/>
</dbReference>
<dbReference type="RefSeq" id="WP_003092021.1">
    <property type="nucleotide sequence ID" value="NZ_CP034244.1"/>
</dbReference>
<dbReference type="SMR" id="Q02QX1"/>
<dbReference type="KEGG" id="pau:PA14_19050"/>
<dbReference type="PseudoCAP" id="PA14_19050"/>
<dbReference type="HOGENOM" id="CLU_009710_7_0_6"/>
<dbReference type="BioCyc" id="PAER208963:G1G74-1569-MONOMER"/>
<dbReference type="Proteomes" id="UP000000653">
    <property type="component" value="Chromosome"/>
</dbReference>
<dbReference type="GO" id="GO:0005829">
    <property type="term" value="C:cytosol"/>
    <property type="evidence" value="ECO:0007669"/>
    <property type="project" value="TreeGrafter"/>
</dbReference>
<dbReference type="GO" id="GO:0005524">
    <property type="term" value="F:ATP binding"/>
    <property type="evidence" value="ECO:0007669"/>
    <property type="project" value="UniProtKB-UniRule"/>
</dbReference>
<dbReference type="GO" id="GO:0046872">
    <property type="term" value="F:metal ion binding"/>
    <property type="evidence" value="ECO:0007669"/>
    <property type="project" value="UniProtKB-KW"/>
</dbReference>
<dbReference type="GO" id="GO:0004825">
    <property type="term" value="F:methionine-tRNA ligase activity"/>
    <property type="evidence" value="ECO:0007669"/>
    <property type="project" value="UniProtKB-UniRule"/>
</dbReference>
<dbReference type="GO" id="GO:0000049">
    <property type="term" value="F:tRNA binding"/>
    <property type="evidence" value="ECO:0007669"/>
    <property type="project" value="UniProtKB-KW"/>
</dbReference>
<dbReference type="GO" id="GO:0006431">
    <property type="term" value="P:methionyl-tRNA aminoacylation"/>
    <property type="evidence" value="ECO:0007669"/>
    <property type="project" value="UniProtKB-UniRule"/>
</dbReference>
<dbReference type="CDD" id="cd07957">
    <property type="entry name" value="Anticodon_Ia_Met"/>
    <property type="match status" value="1"/>
</dbReference>
<dbReference type="CDD" id="cd00814">
    <property type="entry name" value="MetRS_core"/>
    <property type="match status" value="1"/>
</dbReference>
<dbReference type="CDD" id="cd02800">
    <property type="entry name" value="tRNA_bind_EcMetRS_like"/>
    <property type="match status" value="1"/>
</dbReference>
<dbReference type="FunFam" id="1.10.730.10:FF:000005">
    <property type="entry name" value="Methionine--tRNA ligase"/>
    <property type="match status" value="1"/>
</dbReference>
<dbReference type="FunFam" id="2.20.28.20:FF:000001">
    <property type="entry name" value="Methionine--tRNA ligase"/>
    <property type="match status" value="1"/>
</dbReference>
<dbReference type="FunFam" id="2.40.50.140:FF:000042">
    <property type="entry name" value="Methionine--tRNA ligase"/>
    <property type="match status" value="1"/>
</dbReference>
<dbReference type="Gene3D" id="3.40.50.620">
    <property type="entry name" value="HUPs"/>
    <property type="match status" value="1"/>
</dbReference>
<dbReference type="Gene3D" id="1.10.730.10">
    <property type="entry name" value="Isoleucyl-tRNA Synthetase, Domain 1"/>
    <property type="match status" value="1"/>
</dbReference>
<dbReference type="Gene3D" id="2.20.28.20">
    <property type="entry name" value="Methionyl-tRNA synthetase, Zn-domain"/>
    <property type="match status" value="1"/>
</dbReference>
<dbReference type="Gene3D" id="2.40.50.140">
    <property type="entry name" value="Nucleic acid-binding proteins"/>
    <property type="match status" value="1"/>
</dbReference>
<dbReference type="HAMAP" id="MF_00098">
    <property type="entry name" value="Met_tRNA_synth_type1"/>
    <property type="match status" value="1"/>
</dbReference>
<dbReference type="InterPro" id="IPR001412">
    <property type="entry name" value="aa-tRNA-synth_I_CS"/>
</dbReference>
<dbReference type="InterPro" id="IPR041872">
    <property type="entry name" value="Anticodon_Met"/>
</dbReference>
<dbReference type="InterPro" id="IPR004495">
    <property type="entry name" value="Met-tRNA-synth_bsu_C"/>
</dbReference>
<dbReference type="InterPro" id="IPR023458">
    <property type="entry name" value="Met-tRNA_ligase_1"/>
</dbReference>
<dbReference type="InterPro" id="IPR014758">
    <property type="entry name" value="Met-tRNA_synth"/>
</dbReference>
<dbReference type="InterPro" id="IPR015413">
    <property type="entry name" value="Methionyl/Leucyl_tRNA_Synth"/>
</dbReference>
<dbReference type="InterPro" id="IPR033911">
    <property type="entry name" value="MetRS_core"/>
</dbReference>
<dbReference type="InterPro" id="IPR029038">
    <property type="entry name" value="MetRS_Zn"/>
</dbReference>
<dbReference type="InterPro" id="IPR012340">
    <property type="entry name" value="NA-bd_OB-fold"/>
</dbReference>
<dbReference type="InterPro" id="IPR014729">
    <property type="entry name" value="Rossmann-like_a/b/a_fold"/>
</dbReference>
<dbReference type="InterPro" id="IPR002547">
    <property type="entry name" value="tRNA-bd_dom"/>
</dbReference>
<dbReference type="InterPro" id="IPR009080">
    <property type="entry name" value="tRNAsynth_Ia_anticodon-bd"/>
</dbReference>
<dbReference type="NCBIfam" id="TIGR00398">
    <property type="entry name" value="metG"/>
    <property type="match status" value="1"/>
</dbReference>
<dbReference type="NCBIfam" id="TIGR00399">
    <property type="entry name" value="metG_C_term"/>
    <property type="match status" value="1"/>
</dbReference>
<dbReference type="NCBIfam" id="NF001100">
    <property type="entry name" value="PRK00133.1"/>
    <property type="match status" value="1"/>
</dbReference>
<dbReference type="PANTHER" id="PTHR45765">
    <property type="entry name" value="METHIONINE--TRNA LIGASE"/>
    <property type="match status" value="1"/>
</dbReference>
<dbReference type="PANTHER" id="PTHR45765:SF1">
    <property type="entry name" value="METHIONINE--TRNA LIGASE, CYTOPLASMIC"/>
    <property type="match status" value="1"/>
</dbReference>
<dbReference type="Pfam" id="PF19303">
    <property type="entry name" value="Anticodon_3"/>
    <property type="match status" value="1"/>
</dbReference>
<dbReference type="Pfam" id="PF09334">
    <property type="entry name" value="tRNA-synt_1g"/>
    <property type="match status" value="1"/>
</dbReference>
<dbReference type="Pfam" id="PF01588">
    <property type="entry name" value="tRNA_bind"/>
    <property type="match status" value="1"/>
</dbReference>
<dbReference type="PRINTS" id="PR01041">
    <property type="entry name" value="TRNASYNTHMET"/>
</dbReference>
<dbReference type="SUPFAM" id="SSF47323">
    <property type="entry name" value="Anticodon-binding domain of a subclass of class I aminoacyl-tRNA synthetases"/>
    <property type="match status" value="1"/>
</dbReference>
<dbReference type="SUPFAM" id="SSF57770">
    <property type="entry name" value="Methionyl-tRNA synthetase (MetRS), Zn-domain"/>
    <property type="match status" value="1"/>
</dbReference>
<dbReference type="SUPFAM" id="SSF50249">
    <property type="entry name" value="Nucleic acid-binding proteins"/>
    <property type="match status" value="1"/>
</dbReference>
<dbReference type="SUPFAM" id="SSF52374">
    <property type="entry name" value="Nucleotidylyl transferase"/>
    <property type="match status" value="1"/>
</dbReference>
<dbReference type="PROSITE" id="PS00178">
    <property type="entry name" value="AA_TRNA_LIGASE_I"/>
    <property type="match status" value="1"/>
</dbReference>
<dbReference type="PROSITE" id="PS50886">
    <property type="entry name" value="TRBD"/>
    <property type="match status" value="1"/>
</dbReference>
<evidence type="ECO:0000255" key="1">
    <source>
        <dbReference type="HAMAP-Rule" id="MF_00098"/>
    </source>
</evidence>
<proteinExistence type="inferred from homology"/>
<keyword id="KW-0030">Aminoacyl-tRNA synthetase</keyword>
<keyword id="KW-0067">ATP-binding</keyword>
<keyword id="KW-0963">Cytoplasm</keyword>
<keyword id="KW-0436">Ligase</keyword>
<keyword id="KW-0479">Metal-binding</keyword>
<keyword id="KW-0547">Nucleotide-binding</keyword>
<keyword id="KW-0648">Protein biosynthesis</keyword>
<keyword id="KW-0694">RNA-binding</keyword>
<keyword id="KW-0820">tRNA-binding</keyword>
<keyword id="KW-0862">Zinc</keyword>
<organism>
    <name type="scientific">Pseudomonas aeruginosa (strain UCBPP-PA14)</name>
    <dbReference type="NCBI Taxonomy" id="208963"/>
    <lineage>
        <taxon>Bacteria</taxon>
        <taxon>Pseudomonadati</taxon>
        <taxon>Pseudomonadota</taxon>
        <taxon>Gammaproteobacteria</taxon>
        <taxon>Pseudomonadales</taxon>
        <taxon>Pseudomonadaceae</taxon>
        <taxon>Pseudomonas</taxon>
    </lineage>
</organism>
<accession>Q02QX1</accession>
<gene>
    <name evidence="1" type="primary">metG</name>
    <name type="ordered locus">PA14_19050</name>
</gene>
<comment type="function">
    <text evidence="1">Is required not only for elongation of protein synthesis but also for the initiation of all mRNA translation through initiator tRNA(fMet) aminoacylation.</text>
</comment>
<comment type="catalytic activity">
    <reaction evidence="1">
        <text>tRNA(Met) + L-methionine + ATP = L-methionyl-tRNA(Met) + AMP + diphosphate</text>
        <dbReference type="Rhea" id="RHEA:13481"/>
        <dbReference type="Rhea" id="RHEA-COMP:9667"/>
        <dbReference type="Rhea" id="RHEA-COMP:9698"/>
        <dbReference type="ChEBI" id="CHEBI:30616"/>
        <dbReference type="ChEBI" id="CHEBI:33019"/>
        <dbReference type="ChEBI" id="CHEBI:57844"/>
        <dbReference type="ChEBI" id="CHEBI:78442"/>
        <dbReference type="ChEBI" id="CHEBI:78530"/>
        <dbReference type="ChEBI" id="CHEBI:456215"/>
        <dbReference type="EC" id="6.1.1.10"/>
    </reaction>
</comment>
<comment type="cofactor">
    <cofactor evidence="1">
        <name>Zn(2+)</name>
        <dbReference type="ChEBI" id="CHEBI:29105"/>
    </cofactor>
    <text evidence="1">Binds 1 zinc ion per subunit.</text>
</comment>
<comment type="subunit">
    <text evidence="1">Homodimer.</text>
</comment>
<comment type="subcellular location">
    <subcellularLocation>
        <location evidence="1">Cytoplasm</location>
    </subcellularLocation>
</comment>
<comment type="similarity">
    <text evidence="1">Belongs to the class-I aminoacyl-tRNA synthetase family. MetG type 1 subfamily.</text>
</comment>
<reference key="1">
    <citation type="journal article" date="2006" name="Genome Biol.">
        <title>Genomic analysis reveals that Pseudomonas aeruginosa virulence is combinatorial.</title>
        <authorList>
            <person name="Lee D.G."/>
            <person name="Urbach J.M."/>
            <person name="Wu G."/>
            <person name="Liberati N.T."/>
            <person name="Feinbaum R.L."/>
            <person name="Miyata S."/>
            <person name="Diggins L.T."/>
            <person name="He J."/>
            <person name="Saucier M."/>
            <person name="Deziel E."/>
            <person name="Friedman L."/>
            <person name="Li L."/>
            <person name="Grills G."/>
            <person name="Montgomery K."/>
            <person name="Kucherlapati R."/>
            <person name="Rahme L.G."/>
            <person name="Ausubel F.M."/>
        </authorList>
    </citation>
    <scope>NUCLEOTIDE SEQUENCE [LARGE SCALE GENOMIC DNA]</scope>
    <source>
        <strain>UCBPP-PA14</strain>
    </source>
</reference>
<name>SYM_PSEAB</name>